<gene>
    <name evidence="6" type="primary">eupE</name>
    <name type="ORF">gme12634</name>
</gene>
<proteinExistence type="evidence at protein level"/>
<feature type="chain" id="PRO_0000449160" description="Alpha-humulene synthase eupE">
    <location>
        <begin position="1"/>
        <end position="379"/>
    </location>
</feature>
<reference key="1">
    <citation type="journal article" date="2019" name="Fungal Genet. Biol.">
        <title>Identification of the gene cluster for bistropolone-humulene meroterpenoid biosynthesis in Phoma sp.</title>
        <authorList>
            <person name="Zhai Y."/>
            <person name="Li Y."/>
            <person name="Zhang J."/>
            <person name="Zhang Y."/>
            <person name="Ren F."/>
            <person name="Zhang X."/>
            <person name="Liu G."/>
            <person name="Liu X."/>
            <person name="Che Y."/>
        </authorList>
    </citation>
    <scope>NUCLEOTIDE SEQUENCE [GENOMIC DNA]</scope>
    <scope>FUNCTION</scope>
    <scope>DISRUPTION PHENOTYPE</scope>
    <scope>CATALYTIC ACTIVITY</scope>
    <scope>PATHWAY</scope>
    <source>
        <strain>XZ068 / CGMCC No. 10481</strain>
    </source>
</reference>
<reference key="2">
    <citation type="journal article" date="1993" name="J. Antibiot.">
        <title>Eupenifeldin, a novel cytotoxic bistropolone from Eupenicillium brefeldianum.</title>
        <authorList>
            <person name="Mayerl F."/>
            <person name="Gao Q."/>
            <person name="Huang S."/>
            <person name="Klohr S.E."/>
            <person name="Matson J.A."/>
            <person name="Gustavson D.R."/>
            <person name="Pirnik D.M."/>
            <person name="Berry R.L."/>
            <person name="Fairchild C."/>
            <person name="Rose W.C."/>
        </authorList>
    </citation>
    <scope>BIOTECHNOLOGY</scope>
</reference>
<reference key="3">
    <citation type="journal article" date="2008" name="J. Nat. Prod.">
        <title>Noreupenifeldin, a tropolone from an unidentified ascomycete.</title>
        <authorList>
            <person name="Ayers S."/>
            <person name="Zink D.L."/>
            <person name="Powell J.S."/>
            <person name="Brown C.M."/>
            <person name="Grund A."/>
            <person name="Bills G.F."/>
            <person name="Platas G."/>
            <person name="Thompson D."/>
            <person name="Singh S.B."/>
        </authorList>
    </citation>
    <scope>BIOTECHNOLOGY</scope>
</reference>
<reference key="4">
    <citation type="journal article" date="2008" name="Phytochem. Lett.">
        <title>Ramiferin, a bisphenol-sesquiterpene from the fungus Kionochaeta ramifera BCC 7585.</title>
        <authorList>
            <person name="Bunyapaiboonsri T."/>
            <person name="Veeranondha S."/>
            <person name="Boonruangprapa T."/>
            <person name="Somrithipol S."/>
        </authorList>
    </citation>
    <scope>BIOTECHNOLOGY</scope>
</reference>
<name>EUPE_PHOSX</name>
<comment type="function">
    <text evidence="3 8">Alpha-humulene synthase; part of the gene cluster that mediates the biosynthesis of eupenifeldin, a bistropolone meroterpenoid that acts as an antitumor agent (PubMed:30980906). The first step of eupenifeldin biosynthesis is the biosynthesis of 3-methylorcinaldehyde performed by the non-reducing polyketide synthase eupA (PubMed:30980906). Oxidative dearomatization of 3-methylorcinaldehyde likely catalyzed by the FAD-dependent monooxygenase eupB is followed by oxidative ring expansion by the 2-oxoglutarate-dependent dioxygenase eupC to provide the first tropolone metabolite, tropolone stipitaldehyde (Probable). In parallel, generation of sesquiterpene alpha-humulene from farnesylpyrophosphate (FPP) is catalyzed by the terpene cyclase eupE (PubMed:30980906). The cytochrome P450 monooxygenase eupD then hydroxylates humulene to humulenol (PubMed:30980906). The putative Diels-Alderase eupF probably catalyzes the formation of the tropolone-humulene skeleton by linking humulenol and the polyketide moiety (Probable). The short-chain dehydrogenase/reductase eupG and the flavin-dependent monooxygenase eupH are also essential for eupenifeldin biosynthesis and are likely the additional decorating enzymes of the tropolone-humulene skeleton to produce final eupenifeldin or derivatives (Probable).</text>
</comment>
<comment type="catalytic activity">
    <reaction evidence="3">
        <text>(2E,6E)-farnesyl diphosphate = alpha-humulene + diphosphate</text>
        <dbReference type="Rhea" id="RHEA:31895"/>
        <dbReference type="ChEBI" id="CHEBI:5768"/>
        <dbReference type="ChEBI" id="CHEBI:33019"/>
        <dbReference type="ChEBI" id="CHEBI:175763"/>
        <dbReference type="EC" id="4.2.3.104"/>
    </reaction>
    <physiologicalReaction direction="left-to-right" evidence="3">
        <dbReference type="Rhea" id="RHEA:31896"/>
    </physiologicalReaction>
</comment>
<comment type="cofactor">
    <cofactor evidence="1">
        <name>Mg(2+)</name>
        <dbReference type="ChEBI" id="CHEBI:18420"/>
    </cofactor>
</comment>
<comment type="pathway">
    <text evidence="3">Secondary metabolite biosynthesis; terpenoid biosynthesis.</text>
</comment>
<comment type="disruption phenotype">
    <text evidence="3">Abolishes the production of humulene.</text>
</comment>
<comment type="biotechnology">
    <text evidence="2 4 5">Eupenifeldin is a bistropolone-humulene meroterpenoid first discovered as an antitumor and anti-leukemia agent (PubMed:8360103). This metabolite also shows anthelmintic activity against the parasitic worm Hemonchus contortus, anti-malarial activity as well as antifungal activity (PubMed:18095654, Ref.4).</text>
</comment>
<comment type="similarity">
    <text evidence="7">Belongs to the terpene synthase family. Alpha-humulene synthase eupE subfamily.</text>
</comment>
<protein>
    <recommendedName>
        <fullName evidence="6">Alpha-humulene synthase eupE</fullName>
        <ecNumber evidence="3">4.2.3.104</ecNumber>
    </recommendedName>
    <alternativeName>
        <fullName evidence="6">Eupenifeldin biosynthesis cluster protein E</fullName>
    </alternativeName>
</protein>
<organism>
    <name type="scientific">Phoma sp</name>
    <dbReference type="NCBI Taxonomy" id="1707701"/>
    <lineage>
        <taxon>Eukaryota</taxon>
        <taxon>Fungi</taxon>
        <taxon>Dikarya</taxon>
        <taxon>Ascomycota</taxon>
        <taxon>Pezizomycotina</taxon>
        <taxon>Dothideomycetes</taxon>
        <taxon>Pleosporomycetidae</taxon>
        <taxon>Pleosporales</taxon>
        <taxon>Pleosporineae</taxon>
        <taxon>Didymellaceae</taxon>
        <taxon>Phoma</taxon>
    </lineage>
</organism>
<dbReference type="EC" id="4.2.3.104" evidence="3"/>
<dbReference type="EMBL" id="MK400120">
    <property type="protein sequence ID" value="QCO93112.1"/>
    <property type="molecule type" value="Genomic_DNA"/>
</dbReference>
<dbReference type="SMR" id="A0A4P8GFV8"/>
<dbReference type="UniPathway" id="UPA00213"/>
<dbReference type="GO" id="GO:0080017">
    <property type="term" value="F:alpha-humulene synthase activity"/>
    <property type="evidence" value="ECO:0007669"/>
    <property type="project" value="UniProtKB-EC"/>
</dbReference>
<dbReference type="GO" id="GO:0016114">
    <property type="term" value="P:terpenoid biosynthetic process"/>
    <property type="evidence" value="ECO:0007669"/>
    <property type="project" value="UniProtKB-UniPathway"/>
</dbReference>
<sequence>MKEIWETLKQYFGDGFVPGSAPLRYEMHFCDMKEPLNKKQSMRYGVEIPEDAMPLFSVLGDTCAPPCSCQDISGVIEHIDRYLENAPIRHADDYTITSGKDDEDINQVSLYIMRDTLSWWVHWGGSLHPNNYWKLIYVAFAAIPDDVQVHPRDFIDGTYRFLGHSWNDCLNGLLAEGVPSDQVKLAEMTLWRQMATQYIEKVDPGLRSLLVSKTTLMTQYRVMTANTLGCAVLLLASEGVIVGDLDDGALEMASIAQCLSMDMAKEALGVLEGEKTETVAGDRRQLKRELRWLYVRCMKYLDAQPHAEFLRRFASSGLHYVPMMDRYLERVRGHIRFPIRESVARILEPFIKREPTPNKSGREADHIAQVVNEPITVAL</sequence>
<keyword id="KW-0456">Lyase</keyword>
<keyword id="KW-0460">Magnesium</keyword>
<accession>A0A4P8GFV8</accession>
<evidence type="ECO:0000250" key="1">
    <source>
        <dbReference type="UniProtKB" id="A0A2U8U2L5"/>
    </source>
</evidence>
<evidence type="ECO:0000269" key="2">
    <source>
    </source>
</evidence>
<evidence type="ECO:0000269" key="3">
    <source>
    </source>
</evidence>
<evidence type="ECO:0000269" key="4">
    <source>
    </source>
</evidence>
<evidence type="ECO:0000269" key="5">
    <source ref="4"/>
</evidence>
<evidence type="ECO:0000303" key="6">
    <source>
    </source>
</evidence>
<evidence type="ECO:0000305" key="7"/>
<evidence type="ECO:0000305" key="8">
    <source>
    </source>
</evidence>